<accession>Q6HL35</accession>
<protein>
    <recommendedName>
        <fullName evidence="1">UPF0302 protein BT9727_1402</fullName>
    </recommendedName>
</protein>
<name>Y1402_BACHK</name>
<gene>
    <name type="ordered locus">BT9727_1402</name>
</gene>
<proteinExistence type="inferred from homology"/>
<evidence type="ECO:0000255" key="1">
    <source>
        <dbReference type="HAMAP-Rule" id="MF_00760"/>
    </source>
</evidence>
<comment type="similarity">
    <text evidence="1">Belongs to the UPF0302 family.</text>
</comment>
<feature type="chain" id="PRO_1000046726" description="UPF0302 protein BT9727_1402">
    <location>
        <begin position="1"/>
        <end position="178"/>
    </location>
</feature>
<reference key="1">
    <citation type="journal article" date="2006" name="J. Bacteriol.">
        <title>Pathogenomic sequence analysis of Bacillus cereus and Bacillus thuringiensis isolates closely related to Bacillus anthracis.</title>
        <authorList>
            <person name="Han C.S."/>
            <person name="Xie G."/>
            <person name="Challacombe J.F."/>
            <person name="Altherr M.R."/>
            <person name="Bhotika S.S."/>
            <person name="Bruce D."/>
            <person name="Campbell C.S."/>
            <person name="Campbell M.L."/>
            <person name="Chen J."/>
            <person name="Chertkov O."/>
            <person name="Cleland C."/>
            <person name="Dimitrijevic M."/>
            <person name="Doggett N.A."/>
            <person name="Fawcett J.J."/>
            <person name="Glavina T."/>
            <person name="Goodwin L.A."/>
            <person name="Hill K.K."/>
            <person name="Hitchcock P."/>
            <person name="Jackson P.J."/>
            <person name="Keim P."/>
            <person name="Kewalramani A.R."/>
            <person name="Longmire J."/>
            <person name="Lucas S."/>
            <person name="Malfatti S."/>
            <person name="McMurry K."/>
            <person name="Meincke L.J."/>
            <person name="Misra M."/>
            <person name="Moseman B.L."/>
            <person name="Mundt M."/>
            <person name="Munk A.C."/>
            <person name="Okinaka R.T."/>
            <person name="Parson-Quintana B."/>
            <person name="Reilly L.P."/>
            <person name="Richardson P."/>
            <person name="Robinson D.L."/>
            <person name="Rubin E."/>
            <person name="Saunders E."/>
            <person name="Tapia R."/>
            <person name="Tesmer J.G."/>
            <person name="Thayer N."/>
            <person name="Thompson L.S."/>
            <person name="Tice H."/>
            <person name="Ticknor L.O."/>
            <person name="Wills P.L."/>
            <person name="Brettin T.S."/>
            <person name="Gilna P."/>
        </authorList>
    </citation>
    <scope>NUCLEOTIDE SEQUENCE [LARGE SCALE GENOMIC DNA]</scope>
    <source>
        <strain>97-27</strain>
    </source>
</reference>
<sequence length="178" mass="21432">MNTPVSVNEKKDFVKWFLNNYQLKQRECVWILNYLMSHDQLMHKVHFVEHAKYCPRGLVMSANCVKDTPFHFFKQNVMTTDAEKSFHDIRLNRDEDIYIQLNFKSSFQNANYVAVLEENPYLPKHIEVNEKDRLLAERFLEESVFSFRRERLLKQIDEALDKQDKEAFHRLTAELKML</sequence>
<dbReference type="EMBL" id="AE017355">
    <property type="protein sequence ID" value="AAT62723.1"/>
    <property type="molecule type" value="Genomic_DNA"/>
</dbReference>
<dbReference type="RefSeq" id="WP_001095923.1">
    <property type="nucleotide sequence ID" value="NC_005957.1"/>
</dbReference>
<dbReference type="RefSeq" id="YP_035736.1">
    <property type="nucleotide sequence ID" value="NC_005957.1"/>
</dbReference>
<dbReference type="SMR" id="Q6HL35"/>
<dbReference type="KEGG" id="btk:BT9727_1402"/>
<dbReference type="PATRIC" id="fig|281309.8.peg.1474"/>
<dbReference type="HOGENOM" id="CLU_126019_0_0_9"/>
<dbReference type="Proteomes" id="UP000001301">
    <property type="component" value="Chromosome"/>
</dbReference>
<dbReference type="Gene3D" id="3.40.1530.30">
    <property type="entry name" value="Uncharacterised family UPF0302, N-terminal domain"/>
    <property type="match status" value="1"/>
</dbReference>
<dbReference type="Gene3D" id="4.10.810.10">
    <property type="entry name" value="Virus Scaffolding Protein, Chain A"/>
    <property type="match status" value="1"/>
</dbReference>
<dbReference type="HAMAP" id="MF_00760">
    <property type="entry name" value="UPF0302"/>
    <property type="match status" value="1"/>
</dbReference>
<dbReference type="InterPro" id="IPR014957">
    <property type="entry name" value="IDEAL_dom"/>
</dbReference>
<dbReference type="InterPro" id="IPR011188">
    <property type="entry name" value="UPF0302"/>
</dbReference>
<dbReference type="InterPro" id="IPR014963">
    <property type="entry name" value="UPF0302_N"/>
</dbReference>
<dbReference type="InterPro" id="IPR038091">
    <property type="entry name" value="UPF0302_N_sf"/>
</dbReference>
<dbReference type="InterPro" id="IPR027393">
    <property type="entry name" value="Virus_scaffolding_prot_C"/>
</dbReference>
<dbReference type="NCBIfam" id="NF002965">
    <property type="entry name" value="PRK03636.1"/>
    <property type="match status" value="1"/>
</dbReference>
<dbReference type="Pfam" id="PF08858">
    <property type="entry name" value="IDEAL"/>
    <property type="match status" value="1"/>
</dbReference>
<dbReference type="Pfam" id="PF08864">
    <property type="entry name" value="UPF0302"/>
    <property type="match status" value="1"/>
</dbReference>
<dbReference type="PIRSF" id="PIRSF007165">
    <property type="entry name" value="UCP007165"/>
    <property type="match status" value="1"/>
</dbReference>
<dbReference type="SMART" id="SM00914">
    <property type="entry name" value="IDEAL"/>
    <property type="match status" value="1"/>
</dbReference>
<organism>
    <name type="scientific">Bacillus thuringiensis subsp. konkukian (strain 97-27)</name>
    <dbReference type="NCBI Taxonomy" id="281309"/>
    <lineage>
        <taxon>Bacteria</taxon>
        <taxon>Bacillati</taxon>
        <taxon>Bacillota</taxon>
        <taxon>Bacilli</taxon>
        <taxon>Bacillales</taxon>
        <taxon>Bacillaceae</taxon>
        <taxon>Bacillus</taxon>
        <taxon>Bacillus cereus group</taxon>
    </lineage>
</organism>